<dbReference type="EMBL" id="U37488">
    <property type="protein sequence ID" value="AAA79193.1"/>
    <property type="molecule type" value="Genomic_DNA"/>
</dbReference>
<dbReference type="EMBL" id="U12501">
    <property type="protein sequence ID" value="AAA67245.1"/>
    <property type="molecule type" value="Genomic_DNA"/>
</dbReference>
<dbReference type="RefSeq" id="NP_043294.1">
    <property type="nucleotide sequence ID" value="NC_001676.1"/>
</dbReference>
<dbReference type="SMR" id="P50819"/>
<dbReference type="GeneID" id="1497438"/>
<dbReference type="KEGG" id="vg:1497438"/>
<dbReference type="OrthoDB" id="5037at10239"/>
<dbReference type="Proteomes" id="UP000007665">
    <property type="component" value="Segment"/>
</dbReference>
<dbReference type="GO" id="GO:0042025">
    <property type="term" value="C:host cell nucleus"/>
    <property type="evidence" value="ECO:0007669"/>
    <property type="project" value="UniProtKB-SubCell"/>
</dbReference>
<dbReference type="GO" id="GO:0039620">
    <property type="term" value="C:T=7 icosahedral viral capsid"/>
    <property type="evidence" value="ECO:0007669"/>
    <property type="project" value="UniProtKB-UniRule"/>
</dbReference>
<dbReference type="GO" id="GO:0005198">
    <property type="term" value="F:structural molecule activity"/>
    <property type="evidence" value="ECO:0007669"/>
    <property type="project" value="UniProtKB-UniRule"/>
</dbReference>
<dbReference type="GO" id="GO:0075509">
    <property type="term" value="P:endocytosis involved in viral entry into host cell"/>
    <property type="evidence" value="ECO:0007669"/>
    <property type="project" value="UniProtKB-KW"/>
</dbReference>
<dbReference type="GO" id="GO:0019062">
    <property type="term" value="P:virion attachment to host cell"/>
    <property type="evidence" value="ECO:0007669"/>
    <property type="project" value="UniProtKB-UniRule"/>
</dbReference>
<dbReference type="Gene3D" id="2.60.175.20">
    <property type="entry name" value="Major capsid L1 (late) superfamily, Papillomavirus"/>
    <property type="match status" value="1"/>
</dbReference>
<dbReference type="HAMAP" id="MF_04002">
    <property type="entry name" value="PPV_L1"/>
    <property type="match status" value="1"/>
</dbReference>
<dbReference type="InterPro" id="IPR002210">
    <property type="entry name" value="Capsid_L1_Papillomavir"/>
</dbReference>
<dbReference type="InterPro" id="IPR036973">
    <property type="entry name" value="Capsid_L1_sf_Papillomavir"/>
</dbReference>
<dbReference type="InterPro" id="IPR011222">
    <property type="entry name" value="dsDNA_vir_gr_I_capsid"/>
</dbReference>
<dbReference type="Pfam" id="PF00500">
    <property type="entry name" value="Late_protein_L1"/>
    <property type="match status" value="1"/>
</dbReference>
<dbReference type="PRINTS" id="PR00865">
    <property type="entry name" value="HPVCAPSIDL1"/>
</dbReference>
<dbReference type="SUPFAM" id="SSF88648">
    <property type="entry name" value="Group I dsDNA viruses"/>
    <property type="match status" value="1"/>
</dbReference>
<reference key="1">
    <citation type="submission" date="1995-10" db="EMBL/GenBank/DDBJ databases">
        <authorList>
            <person name="Delius H."/>
        </authorList>
    </citation>
    <scope>NUCLEOTIDE SEQUENCE [GENOMIC DNA]</scope>
</reference>
<reference key="2">
    <citation type="journal article" date="1994" name="J. Infect. Dis.">
        <title>Identification and assessment of known and novel human papillomaviruses by polymerase chain reaction amplification, restriction fragment length polymorphisms, nucleotide sequence, and phylogenetic algorithms.</title>
        <authorList>
            <person name="Bernard H.U."/>
            <person name="Chan S.-Y."/>
            <person name="Manos M.M."/>
            <person name="Ong C.K."/>
            <person name="Villa L.L."/>
            <person name="Delius H."/>
            <person name="Peyton C.L."/>
            <person name="Bauer H.M."/>
            <person name="Wheeler C.M."/>
        </authorList>
    </citation>
    <scope>NUCLEOTIDE SEQUENCE [GENOMIC DNA] OF 310-460</scope>
</reference>
<accession>P50819</accession>
<accession>Q81024</accession>
<name>VL1_HPV54</name>
<evidence type="ECO:0000255" key="1">
    <source>
        <dbReference type="HAMAP-Rule" id="MF_04002"/>
    </source>
</evidence>
<evidence type="ECO:0000256" key="2">
    <source>
        <dbReference type="SAM" id="MobiDB-lite"/>
    </source>
</evidence>
<evidence type="ECO:0000305" key="3"/>
<proteinExistence type="inferred from homology"/>
<keyword id="KW-0167">Capsid protein</keyword>
<keyword id="KW-1015">Disulfide bond</keyword>
<keyword id="KW-1048">Host nucleus</keyword>
<keyword id="KW-0945">Host-virus interaction</keyword>
<keyword id="KW-0426">Late protein</keyword>
<keyword id="KW-1185">Reference proteome</keyword>
<keyword id="KW-1145">T=7 icosahedral capsid protein</keyword>
<keyword id="KW-1161">Viral attachment to host cell</keyword>
<keyword id="KW-1162">Viral penetration into host cytoplasm</keyword>
<keyword id="KW-0946">Virion</keyword>
<keyword id="KW-1164">Virus endocytosis by host</keyword>
<keyword id="KW-1160">Virus entry into host cell</keyword>
<comment type="function">
    <text evidence="1">Forms an icosahedral capsid with a T=7 symmetry and a 50 nm diameter. The capsid is composed of 72 pentamers linked to each other by disulfide bonds and associated with L2 proteins. Binds to heparan sulfate proteoglycans on cell surface of basal layer keratinocytes to provide initial virion attachment. This binding mediates a conformational change in the virus capsid that facilitates efficient infection. The virion enters the host cell via endocytosis. During virus trafficking, L1 protein dissociates from the viral DNA and the genomic DNA is released to the host nucleus. The virion assembly takes place within the cell nucleus. Encapsulates the genomic DNA together with protein L2.</text>
</comment>
<comment type="subunit">
    <text evidence="1">Self-assembles into homopentamers. The capsid has an icosahedral symmetry and consists of 72 capsomers, with each capsomer being a pentamer of L1. Interacts with the minor capsid protein L2; this interaction is necessary for viral genome encapsidation. Interacts with protein E2; this interaction enhances E2-dependent replication and transcription activation.</text>
</comment>
<comment type="subcellular location">
    <subcellularLocation>
        <location evidence="1">Virion</location>
    </subcellularLocation>
    <subcellularLocation>
        <location evidence="1">Host nucleus</location>
    </subcellularLocation>
</comment>
<comment type="similarity">
    <text evidence="1">Belongs to the papillomaviridae L1 protein family.</text>
</comment>
<feature type="chain" id="PRO_0000133537" description="Major capsid protein L1">
    <location>
        <begin position="1"/>
        <end position="497"/>
    </location>
</feature>
<feature type="region of interest" description="Disordered" evidence="2">
    <location>
        <begin position="473"/>
        <end position="497"/>
    </location>
</feature>
<feature type="compositionally biased region" description="Basic residues" evidence="2">
    <location>
        <begin position="488"/>
        <end position="497"/>
    </location>
</feature>
<feature type="disulfide bond" description="Interchain (with C-421)" evidence="1">
    <location>
        <position position="171"/>
    </location>
</feature>
<feature type="disulfide bond" description="Interchain (with C-171)" evidence="1">
    <location>
        <position position="421"/>
    </location>
</feature>
<feature type="sequence conflict" description="In Ref. 2; AAA67245." evidence="3" ref="2">
    <original>Q</original>
    <variation>H</variation>
    <location>
        <position position="313"/>
    </location>
</feature>
<feature type="sequence conflict" description="In Ref. 2; AAA67245." evidence="3" ref="2">
    <original>V</original>
    <variation>L</variation>
    <location>
        <position position="323"/>
    </location>
</feature>
<feature type="sequence conflict" description="In Ref. 2; AAA67245." evidence="3" ref="2">
    <original>I</original>
    <variation>T</variation>
    <location>
        <position position="368"/>
    </location>
</feature>
<feature type="sequence conflict" description="In Ref. 2; AAA67245." evidence="3" ref="2">
    <original>T</original>
    <variation>A</variation>
    <location>
        <position position="375"/>
    </location>
</feature>
<feature type="sequence conflict" description="In Ref. 2; AAA67245." evidence="3" ref="2">
    <original>N</original>
    <variation>T</variation>
    <location>
        <position position="439"/>
    </location>
</feature>
<feature type="sequence conflict" description="In Ref. 2; AAA67245." evidence="3" ref="2">
    <original>F</original>
    <variation>Y</variation>
    <location>
        <position position="456"/>
    </location>
</feature>
<organism>
    <name type="scientific">Human papillomavirus type 54</name>
    <dbReference type="NCBI Taxonomy" id="1671798"/>
    <lineage>
        <taxon>Viruses</taxon>
        <taxon>Monodnaviria</taxon>
        <taxon>Shotokuvirae</taxon>
        <taxon>Cossaviricota</taxon>
        <taxon>Papovaviricetes</taxon>
        <taxon>Zurhausenvirales</taxon>
        <taxon>Papillomaviridae</taxon>
        <taxon>Firstpapillomavirinae</taxon>
        <taxon>Alphapapillomavirus</taxon>
        <taxon>Alphapapillomavirus 13</taxon>
    </lineage>
</organism>
<protein>
    <recommendedName>
        <fullName evidence="1">Major capsid protein L1</fullName>
    </recommendedName>
</protein>
<gene>
    <name evidence="1" type="primary">L1</name>
</gene>
<sequence>MWRPSENKVYLPPTPVSKVVSTDEYVTRTSIYYHASSSRLLAVGHPYFKVQKTNNKQSIPKVSGYQYRVFRVQLPDPNKFGLPDPSLYNPETQRLVWACTGVEVGRGQPLGLGLSGHPLLNKLDDTENAPKYVGAGADNRENVSMDYKQTQLCILGCTPPIGEHWAKGNLCTPNTLAAGDCPPLELVNSYIQDGDMVDIGFGAMDFKTLQTSKSEVPLDVATSICKYPDYLKMAAEAYGDSLFFYLRREQMFVRHMLNRAGTMGEPVPNDLYIKKSSGNLDSSIYAATPSGSMVTSEYQIFNKPYWLQRAQGQNNGICWGNQVFLTVVDTTRSTNLTLCATASTQDSFNNSDFREYIRHVEEYDLQFIFQLCTITLTADVMAYIHGMNPTILEDWNFGITPPATSSLEDTYRFVQSQAIACQKNNAPAKEKEDPYSKFNFWTVDLKERFSSDLDQFPLGRKFLLQAGLRARPRLRPVKRAAPSSSKGTARKRAKTKR</sequence>
<organismHost>
    <name type="scientific">Homo sapiens</name>
    <name type="common">Human</name>
    <dbReference type="NCBI Taxonomy" id="9606"/>
</organismHost>